<proteinExistence type="inferred from homology"/>
<gene>
    <name evidence="1" type="primary">rpmH</name>
    <name type="ordered locus">SSP2446</name>
</gene>
<evidence type="ECO:0000255" key="1">
    <source>
        <dbReference type="HAMAP-Rule" id="MF_00391"/>
    </source>
</evidence>
<evidence type="ECO:0000256" key="2">
    <source>
        <dbReference type="SAM" id="MobiDB-lite"/>
    </source>
</evidence>
<evidence type="ECO:0000305" key="3"/>
<dbReference type="EMBL" id="AP008934">
    <property type="protein sequence ID" value="BAE19591.1"/>
    <property type="molecule type" value="Genomic_DNA"/>
</dbReference>
<dbReference type="RefSeq" id="WP_000240855.1">
    <property type="nucleotide sequence ID" value="NZ_MTGA01000035.1"/>
</dbReference>
<dbReference type="SMR" id="Q49UI2"/>
<dbReference type="GeneID" id="98347025"/>
<dbReference type="KEGG" id="ssp:SSP2446"/>
<dbReference type="eggNOG" id="COG0230">
    <property type="taxonomic scope" value="Bacteria"/>
</dbReference>
<dbReference type="HOGENOM" id="CLU_129938_2_0_9"/>
<dbReference type="Proteomes" id="UP000006371">
    <property type="component" value="Chromosome"/>
</dbReference>
<dbReference type="GO" id="GO:1990904">
    <property type="term" value="C:ribonucleoprotein complex"/>
    <property type="evidence" value="ECO:0007669"/>
    <property type="project" value="UniProtKB-KW"/>
</dbReference>
<dbReference type="GO" id="GO:0005840">
    <property type="term" value="C:ribosome"/>
    <property type="evidence" value="ECO:0007669"/>
    <property type="project" value="UniProtKB-KW"/>
</dbReference>
<dbReference type="GO" id="GO:0003735">
    <property type="term" value="F:structural constituent of ribosome"/>
    <property type="evidence" value="ECO:0007669"/>
    <property type="project" value="InterPro"/>
</dbReference>
<dbReference type="GO" id="GO:0006412">
    <property type="term" value="P:translation"/>
    <property type="evidence" value="ECO:0007669"/>
    <property type="project" value="UniProtKB-UniRule"/>
</dbReference>
<dbReference type="FunFam" id="1.10.287.3980:FF:000001">
    <property type="entry name" value="Mitochondrial ribosomal protein L34"/>
    <property type="match status" value="1"/>
</dbReference>
<dbReference type="Gene3D" id="1.10.287.3980">
    <property type="match status" value="1"/>
</dbReference>
<dbReference type="HAMAP" id="MF_00391">
    <property type="entry name" value="Ribosomal_bL34"/>
    <property type="match status" value="1"/>
</dbReference>
<dbReference type="InterPro" id="IPR000271">
    <property type="entry name" value="Ribosomal_bL34"/>
</dbReference>
<dbReference type="InterPro" id="IPR020939">
    <property type="entry name" value="Ribosomal_bL34_CS"/>
</dbReference>
<dbReference type="NCBIfam" id="TIGR01030">
    <property type="entry name" value="rpmH_bact"/>
    <property type="match status" value="1"/>
</dbReference>
<dbReference type="PANTHER" id="PTHR14503:SF4">
    <property type="entry name" value="LARGE RIBOSOMAL SUBUNIT PROTEIN BL34M"/>
    <property type="match status" value="1"/>
</dbReference>
<dbReference type="PANTHER" id="PTHR14503">
    <property type="entry name" value="MITOCHONDRIAL RIBOSOMAL PROTEIN 34 FAMILY MEMBER"/>
    <property type="match status" value="1"/>
</dbReference>
<dbReference type="Pfam" id="PF00468">
    <property type="entry name" value="Ribosomal_L34"/>
    <property type="match status" value="1"/>
</dbReference>
<dbReference type="PROSITE" id="PS00784">
    <property type="entry name" value="RIBOSOMAL_L34"/>
    <property type="match status" value="1"/>
</dbReference>
<organism>
    <name type="scientific">Staphylococcus saprophyticus subsp. saprophyticus (strain ATCC 15305 / DSM 20229 / NCIMB 8711 / NCTC 7292 / S-41)</name>
    <dbReference type="NCBI Taxonomy" id="342451"/>
    <lineage>
        <taxon>Bacteria</taxon>
        <taxon>Bacillati</taxon>
        <taxon>Bacillota</taxon>
        <taxon>Bacilli</taxon>
        <taxon>Bacillales</taxon>
        <taxon>Staphylococcaceae</taxon>
        <taxon>Staphylococcus</taxon>
    </lineage>
</organism>
<feature type="chain" id="PRO_1000013460" description="Large ribosomal subunit protein bL34">
    <location>
        <begin position="1"/>
        <end position="45"/>
    </location>
</feature>
<feature type="region of interest" description="Disordered" evidence="2">
    <location>
        <begin position="1"/>
        <end position="45"/>
    </location>
</feature>
<accession>Q49UI2</accession>
<keyword id="KW-1185">Reference proteome</keyword>
<keyword id="KW-0687">Ribonucleoprotein</keyword>
<keyword id="KW-0689">Ribosomal protein</keyword>
<name>RL34_STAS1</name>
<protein>
    <recommendedName>
        <fullName evidence="1">Large ribosomal subunit protein bL34</fullName>
    </recommendedName>
    <alternativeName>
        <fullName evidence="3">50S ribosomal protein L34</fullName>
    </alternativeName>
</protein>
<comment type="similarity">
    <text evidence="1">Belongs to the bacterial ribosomal protein bL34 family.</text>
</comment>
<sequence length="45" mass="5434">MVKRTYQPNKRKHSKVHGFRKRMSTKNGRKVLARRRRKGRKVLSA</sequence>
<reference key="1">
    <citation type="journal article" date="2005" name="Proc. Natl. Acad. Sci. U.S.A.">
        <title>Whole genome sequence of Staphylococcus saprophyticus reveals the pathogenesis of uncomplicated urinary tract infection.</title>
        <authorList>
            <person name="Kuroda M."/>
            <person name="Yamashita A."/>
            <person name="Hirakawa H."/>
            <person name="Kumano M."/>
            <person name="Morikawa K."/>
            <person name="Higashide M."/>
            <person name="Maruyama A."/>
            <person name="Inose Y."/>
            <person name="Matoba K."/>
            <person name="Toh H."/>
            <person name="Kuhara S."/>
            <person name="Hattori M."/>
            <person name="Ohta T."/>
        </authorList>
    </citation>
    <scope>NUCLEOTIDE SEQUENCE [LARGE SCALE GENOMIC DNA]</scope>
    <source>
        <strain>ATCC 15305 / DSM 20229 / NCIMB 8711 / NCTC 7292 / S-41</strain>
    </source>
</reference>